<reference key="1">
    <citation type="journal article" date="2011" name="Stand. Genomic Sci.">
        <title>Complete genome sequence of Parvibaculum lavamentivorans type strain (DS-1(T)).</title>
        <authorList>
            <person name="Schleheck D."/>
            <person name="Weiss M."/>
            <person name="Pitluck S."/>
            <person name="Bruce D."/>
            <person name="Land M.L."/>
            <person name="Han S."/>
            <person name="Saunders E."/>
            <person name="Tapia R."/>
            <person name="Detter C."/>
            <person name="Brettin T."/>
            <person name="Han J."/>
            <person name="Woyke T."/>
            <person name="Goodwin L."/>
            <person name="Pennacchio L."/>
            <person name="Nolan M."/>
            <person name="Cook A.M."/>
            <person name="Kjelleberg S."/>
            <person name="Thomas T."/>
        </authorList>
    </citation>
    <scope>NUCLEOTIDE SEQUENCE [LARGE SCALE GENOMIC DNA]</scope>
    <source>
        <strain>DS-1 / DSM 13023 / NCIMB 13966</strain>
    </source>
</reference>
<sequence length="265" mass="28277">MSDILEKIGAYKLDEIAAAKRARPLASVEEMARAAGSVRGFASALRARVDTGAYALIAEIKKASPSKGLIRADFDPPALARAYQAGGATCLSILTDGPSFQGAPDYLSDARAAVSLPVLRKDFMYDTYQVAEARAMGADAILIIMAAVSDAQAREIEEAAFGWKMDVLVEVHDEEELARAVELKSPLLGINNRNLKTFETTLATTERLAPLVPSGRLLVGESGIFAPDDLTRLSKVGVRTFLVGESLMRQTDVEAATRALLAPPA</sequence>
<evidence type="ECO:0000255" key="1">
    <source>
        <dbReference type="HAMAP-Rule" id="MF_00134"/>
    </source>
</evidence>
<feature type="chain" id="PRO_1000071436" description="Indole-3-glycerol phosphate synthase">
    <location>
        <begin position="1"/>
        <end position="265"/>
    </location>
</feature>
<keyword id="KW-0028">Amino-acid biosynthesis</keyword>
<keyword id="KW-0057">Aromatic amino acid biosynthesis</keyword>
<keyword id="KW-0210">Decarboxylase</keyword>
<keyword id="KW-0456">Lyase</keyword>
<keyword id="KW-1185">Reference proteome</keyword>
<keyword id="KW-0822">Tryptophan biosynthesis</keyword>
<organism>
    <name type="scientific">Parvibaculum lavamentivorans (strain DS-1 / DSM 13023 / NCIMB 13966)</name>
    <dbReference type="NCBI Taxonomy" id="402881"/>
    <lineage>
        <taxon>Bacteria</taxon>
        <taxon>Pseudomonadati</taxon>
        <taxon>Pseudomonadota</taxon>
        <taxon>Alphaproteobacteria</taxon>
        <taxon>Hyphomicrobiales</taxon>
        <taxon>Parvibaculaceae</taxon>
        <taxon>Parvibaculum</taxon>
    </lineage>
</organism>
<comment type="catalytic activity">
    <reaction evidence="1">
        <text>1-(2-carboxyphenylamino)-1-deoxy-D-ribulose 5-phosphate + H(+) = (1S,2R)-1-C-(indol-3-yl)glycerol 3-phosphate + CO2 + H2O</text>
        <dbReference type="Rhea" id="RHEA:23476"/>
        <dbReference type="ChEBI" id="CHEBI:15377"/>
        <dbReference type="ChEBI" id="CHEBI:15378"/>
        <dbReference type="ChEBI" id="CHEBI:16526"/>
        <dbReference type="ChEBI" id="CHEBI:58613"/>
        <dbReference type="ChEBI" id="CHEBI:58866"/>
        <dbReference type="EC" id="4.1.1.48"/>
    </reaction>
</comment>
<comment type="pathway">
    <text evidence="1">Amino-acid biosynthesis; L-tryptophan biosynthesis; L-tryptophan from chorismate: step 4/5.</text>
</comment>
<comment type="similarity">
    <text evidence="1">Belongs to the TrpC family.</text>
</comment>
<name>TRPC_PARL1</name>
<accession>A7HXZ6</accession>
<dbReference type="EC" id="4.1.1.48" evidence="1"/>
<dbReference type="EMBL" id="CP000774">
    <property type="protein sequence ID" value="ABS64779.1"/>
    <property type="molecule type" value="Genomic_DNA"/>
</dbReference>
<dbReference type="RefSeq" id="WP_012112105.1">
    <property type="nucleotide sequence ID" value="NC_009719.1"/>
</dbReference>
<dbReference type="SMR" id="A7HXZ6"/>
<dbReference type="STRING" id="402881.Plav_3173"/>
<dbReference type="KEGG" id="pla:Plav_3173"/>
<dbReference type="eggNOG" id="COG0134">
    <property type="taxonomic scope" value="Bacteria"/>
</dbReference>
<dbReference type="HOGENOM" id="CLU_034247_2_0_5"/>
<dbReference type="OrthoDB" id="9804217at2"/>
<dbReference type="UniPathway" id="UPA00035">
    <property type="reaction ID" value="UER00043"/>
</dbReference>
<dbReference type="Proteomes" id="UP000006377">
    <property type="component" value="Chromosome"/>
</dbReference>
<dbReference type="GO" id="GO:0004425">
    <property type="term" value="F:indole-3-glycerol-phosphate synthase activity"/>
    <property type="evidence" value="ECO:0007669"/>
    <property type="project" value="UniProtKB-UniRule"/>
</dbReference>
<dbReference type="GO" id="GO:0004640">
    <property type="term" value="F:phosphoribosylanthranilate isomerase activity"/>
    <property type="evidence" value="ECO:0007669"/>
    <property type="project" value="TreeGrafter"/>
</dbReference>
<dbReference type="GO" id="GO:0000162">
    <property type="term" value="P:L-tryptophan biosynthetic process"/>
    <property type="evidence" value="ECO:0007669"/>
    <property type="project" value="UniProtKB-UniRule"/>
</dbReference>
<dbReference type="CDD" id="cd00331">
    <property type="entry name" value="IGPS"/>
    <property type="match status" value="1"/>
</dbReference>
<dbReference type="FunFam" id="3.20.20.70:FF:000024">
    <property type="entry name" value="Indole-3-glycerol phosphate synthase"/>
    <property type="match status" value="1"/>
</dbReference>
<dbReference type="Gene3D" id="3.20.20.70">
    <property type="entry name" value="Aldolase class I"/>
    <property type="match status" value="1"/>
</dbReference>
<dbReference type="HAMAP" id="MF_00134_B">
    <property type="entry name" value="IGPS_B"/>
    <property type="match status" value="1"/>
</dbReference>
<dbReference type="InterPro" id="IPR013785">
    <property type="entry name" value="Aldolase_TIM"/>
</dbReference>
<dbReference type="InterPro" id="IPR045186">
    <property type="entry name" value="Indole-3-glycerol_P_synth"/>
</dbReference>
<dbReference type="InterPro" id="IPR013798">
    <property type="entry name" value="Indole-3-glycerol_P_synth_dom"/>
</dbReference>
<dbReference type="InterPro" id="IPR001468">
    <property type="entry name" value="Indole-3-GlycerolPSynthase_CS"/>
</dbReference>
<dbReference type="InterPro" id="IPR011060">
    <property type="entry name" value="RibuloseP-bd_barrel"/>
</dbReference>
<dbReference type="NCBIfam" id="NF001370">
    <property type="entry name" value="PRK00278.1-2"/>
    <property type="match status" value="1"/>
</dbReference>
<dbReference type="NCBIfam" id="NF001373">
    <property type="entry name" value="PRK00278.1-6"/>
    <property type="match status" value="1"/>
</dbReference>
<dbReference type="NCBIfam" id="NF001377">
    <property type="entry name" value="PRK00278.2-4"/>
    <property type="match status" value="1"/>
</dbReference>
<dbReference type="PANTHER" id="PTHR22854:SF2">
    <property type="entry name" value="INDOLE-3-GLYCEROL-PHOSPHATE SYNTHASE"/>
    <property type="match status" value="1"/>
</dbReference>
<dbReference type="PANTHER" id="PTHR22854">
    <property type="entry name" value="TRYPTOPHAN BIOSYNTHESIS PROTEIN"/>
    <property type="match status" value="1"/>
</dbReference>
<dbReference type="Pfam" id="PF00218">
    <property type="entry name" value="IGPS"/>
    <property type="match status" value="1"/>
</dbReference>
<dbReference type="SUPFAM" id="SSF51366">
    <property type="entry name" value="Ribulose-phoshate binding barrel"/>
    <property type="match status" value="1"/>
</dbReference>
<dbReference type="PROSITE" id="PS00614">
    <property type="entry name" value="IGPS"/>
    <property type="match status" value="1"/>
</dbReference>
<gene>
    <name evidence="1" type="primary">trpC</name>
    <name type="ordered locus">Plav_3173</name>
</gene>
<proteinExistence type="inferred from homology"/>
<protein>
    <recommendedName>
        <fullName evidence="1">Indole-3-glycerol phosphate synthase</fullName>
        <shortName evidence="1">IGPS</shortName>
        <ecNumber evidence="1">4.1.1.48</ecNumber>
    </recommendedName>
</protein>